<comment type="function">
    <text evidence="4">Rapidly hydrolyzes choline released into the synapse.</text>
</comment>
<comment type="catalytic activity">
    <reaction evidence="2">
        <text>acetylcholine + H2O = choline + acetate + H(+)</text>
        <dbReference type="Rhea" id="RHEA:17561"/>
        <dbReference type="ChEBI" id="CHEBI:15354"/>
        <dbReference type="ChEBI" id="CHEBI:15355"/>
        <dbReference type="ChEBI" id="CHEBI:15377"/>
        <dbReference type="ChEBI" id="CHEBI:15378"/>
        <dbReference type="ChEBI" id="CHEBI:30089"/>
        <dbReference type="EC" id="3.1.1.7"/>
    </reaction>
</comment>
<comment type="subcellular location">
    <subcellularLocation>
        <location evidence="1">Synapse</location>
    </subcellularLocation>
    <subcellularLocation>
        <location evidence="1">Secreted</location>
    </subcellularLocation>
    <subcellularLocation>
        <location evidence="1">Cell membrane</location>
        <topology evidence="1">Peripheral membrane protein</topology>
    </subcellularLocation>
</comment>
<comment type="similarity">
    <text evidence="4">Belongs to the type-B carboxylesterase/lipase family.</text>
</comment>
<sequence>SGKKVDAWMGIPYAQPPLGPLRFRHPRPAERWTGVLNATKPPNSCVQIVDTVFGDFPGATMWNPNTPLSEDCLYINVVVPRPRPKNAAVMLWIFGGGFYSGTATLDVYDHRTLASEENVIVVSLQYRVASLG</sequence>
<reference evidence="4" key="1">
    <citation type="journal article" date="2003" name="Nature">
        <title>Insecticide resistance in mosquito vectors.</title>
        <authorList>
            <person name="Weill M."/>
            <person name="Lutfalla G."/>
            <person name="Mogensen K."/>
            <person name="Chandre F."/>
            <person name="Berthomieu A."/>
            <person name="Berticat C."/>
            <person name="Pasteur N."/>
            <person name="Philips A."/>
            <person name="Fort P."/>
            <person name="Raymond M."/>
        </authorList>
    </citation>
    <scope>NUCLEOTIDE SEQUENCE [GENOMIC DNA]</scope>
    <source>
        <strain evidence="5">Torrent</strain>
    </source>
</reference>
<proteinExistence type="inferred from homology"/>
<accession>Q86GC9</accession>
<evidence type="ECO:0000250" key="1"/>
<evidence type="ECO:0000250" key="2">
    <source>
        <dbReference type="UniProtKB" id="P22303"/>
    </source>
</evidence>
<evidence type="ECO:0000255" key="3"/>
<evidence type="ECO:0000305" key="4"/>
<evidence type="ECO:0000312" key="5">
    <source>
        <dbReference type="EMBL" id="CAD54788.1"/>
    </source>
</evidence>
<protein>
    <recommendedName>
        <fullName>Acetylcholinesterase</fullName>
        <shortName>AChE</shortName>
        <ecNumber>3.1.1.7</ecNumber>
    </recommendedName>
</protein>
<dbReference type="EC" id="3.1.1.7"/>
<dbReference type="EMBL" id="AJ512716">
    <property type="protein sequence ID" value="CAD54788.1"/>
    <property type="molecule type" value="Genomic_DNA"/>
</dbReference>
<dbReference type="SMR" id="Q86GC9"/>
<dbReference type="ESTHER" id="culpi-ACHE1">
    <property type="family name" value="ACHE"/>
</dbReference>
<dbReference type="MEROPS" id="S09.980"/>
<dbReference type="GlyCosmos" id="Q86GC9">
    <property type="glycosylation" value="1 site, No reported glycans"/>
</dbReference>
<dbReference type="GO" id="GO:0005615">
    <property type="term" value="C:extracellular space"/>
    <property type="evidence" value="ECO:0007669"/>
    <property type="project" value="TreeGrafter"/>
</dbReference>
<dbReference type="GO" id="GO:0005886">
    <property type="term" value="C:plasma membrane"/>
    <property type="evidence" value="ECO:0007669"/>
    <property type="project" value="UniProtKB-SubCell"/>
</dbReference>
<dbReference type="GO" id="GO:0045202">
    <property type="term" value="C:synapse"/>
    <property type="evidence" value="ECO:0007669"/>
    <property type="project" value="UniProtKB-SubCell"/>
</dbReference>
<dbReference type="GO" id="GO:0003990">
    <property type="term" value="F:acetylcholinesterase activity"/>
    <property type="evidence" value="ECO:0007669"/>
    <property type="project" value="UniProtKB-EC"/>
</dbReference>
<dbReference type="GO" id="GO:0006581">
    <property type="term" value="P:acetylcholine catabolic process"/>
    <property type="evidence" value="ECO:0007669"/>
    <property type="project" value="TreeGrafter"/>
</dbReference>
<dbReference type="GO" id="GO:0019695">
    <property type="term" value="P:choline metabolic process"/>
    <property type="evidence" value="ECO:0007669"/>
    <property type="project" value="TreeGrafter"/>
</dbReference>
<dbReference type="Gene3D" id="3.40.50.1820">
    <property type="entry name" value="alpha/beta hydrolase"/>
    <property type="match status" value="1"/>
</dbReference>
<dbReference type="InterPro" id="IPR029058">
    <property type="entry name" value="AB_hydrolase_fold"/>
</dbReference>
<dbReference type="InterPro" id="IPR050654">
    <property type="entry name" value="AChE-related_enzymes"/>
</dbReference>
<dbReference type="InterPro" id="IPR002018">
    <property type="entry name" value="CarbesteraseB"/>
</dbReference>
<dbReference type="InterPro" id="IPR019819">
    <property type="entry name" value="Carboxylesterase_B_CS"/>
</dbReference>
<dbReference type="InterPro" id="IPR000997">
    <property type="entry name" value="Cholinesterase"/>
</dbReference>
<dbReference type="PANTHER" id="PTHR43918">
    <property type="entry name" value="ACETYLCHOLINESTERASE"/>
    <property type="match status" value="1"/>
</dbReference>
<dbReference type="PANTHER" id="PTHR43918:SF12">
    <property type="entry name" value="ACETYLCHOLINESTERASE 1"/>
    <property type="match status" value="1"/>
</dbReference>
<dbReference type="Pfam" id="PF00135">
    <property type="entry name" value="COesterase"/>
    <property type="match status" value="1"/>
</dbReference>
<dbReference type="PRINTS" id="PR00878">
    <property type="entry name" value="CHOLNESTRASE"/>
</dbReference>
<dbReference type="SUPFAM" id="SSF53474">
    <property type="entry name" value="alpha/beta-Hydrolases"/>
    <property type="match status" value="1"/>
</dbReference>
<dbReference type="PROSITE" id="PS00941">
    <property type="entry name" value="CARBOXYLESTERASE_B_2"/>
    <property type="match status" value="1"/>
</dbReference>
<organism evidence="5">
    <name type="scientific">Culex torrentium</name>
    <name type="common">Mosquito</name>
    <dbReference type="NCBI Taxonomy" id="42433"/>
    <lineage>
        <taxon>Eukaryota</taxon>
        <taxon>Metazoa</taxon>
        <taxon>Ecdysozoa</taxon>
        <taxon>Arthropoda</taxon>
        <taxon>Hexapoda</taxon>
        <taxon>Insecta</taxon>
        <taxon>Pterygota</taxon>
        <taxon>Neoptera</taxon>
        <taxon>Endopterygota</taxon>
        <taxon>Diptera</taxon>
        <taxon>Nematocera</taxon>
        <taxon>Culicoidea</taxon>
        <taxon>Culicidae</taxon>
        <taxon>Culicinae</taxon>
        <taxon>Culicini</taxon>
        <taxon>Culex</taxon>
        <taxon>Culex</taxon>
    </lineage>
</organism>
<name>ACES_CULTO</name>
<feature type="chain" id="PRO_0000070282" description="Acetylcholinesterase">
    <location>
        <begin position="1" status="less than"/>
        <end position="132" status="greater than"/>
    </location>
</feature>
<feature type="glycosylation site" description="N-linked (GlcNAc...) asparagine" evidence="3">
    <location>
        <position position="37"/>
    </location>
</feature>
<feature type="disulfide bond" evidence="1">
    <location>
        <begin position="45"/>
        <end position="72"/>
    </location>
</feature>
<feature type="non-terminal residue" evidence="5">
    <location>
        <position position="1"/>
    </location>
</feature>
<feature type="non-terminal residue" evidence="5">
    <location>
        <position position="132"/>
    </location>
</feature>
<gene>
    <name type="primary">ACE-1</name>
</gene>
<keyword id="KW-1003">Cell membrane</keyword>
<keyword id="KW-1015">Disulfide bond</keyword>
<keyword id="KW-0325">Glycoprotein</keyword>
<keyword id="KW-0378">Hydrolase</keyword>
<keyword id="KW-0472">Membrane</keyword>
<keyword id="KW-0531">Neurotransmitter degradation</keyword>
<keyword id="KW-0964">Secreted</keyword>
<keyword id="KW-0719">Serine esterase</keyword>
<keyword id="KW-0770">Synapse</keyword>